<gene>
    <name evidence="1" type="primary">btsR</name>
    <name type="synonym">yehT</name>
    <name type="ordered locus">STY2388</name>
    <name type="ordered locus">t0697</name>
</gene>
<protein>
    <recommendedName>
        <fullName evidence="1">Transcriptional regulatory protein BtsR</fullName>
    </recommendedName>
</protein>
<comment type="function">
    <text evidence="1">Member of the two-component regulatory system BtsS/BtsR. BtsR regulates expression of btsT by binding to its promoter region.</text>
</comment>
<comment type="PTM">
    <text evidence="1">Phosphorylated by BtsS.</text>
</comment>
<name>BTSR_SALTI</name>
<organism>
    <name type="scientific">Salmonella typhi</name>
    <dbReference type="NCBI Taxonomy" id="90370"/>
    <lineage>
        <taxon>Bacteria</taxon>
        <taxon>Pseudomonadati</taxon>
        <taxon>Pseudomonadota</taxon>
        <taxon>Gammaproteobacteria</taxon>
        <taxon>Enterobacterales</taxon>
        <taxon>Enterobacteriaceae</taxon>
        <taxon>Salmonella</taxon>
    </lineage>
</organism>
<reference key="1">
    <citation type="journal article" date="2001" name="Nature">
        <title>Complete genome sequence of a multiple drug resistant Salmonella enterica serovar Typhi CT18.</title>
        <authorList>
            <person name="Parkhill J."/>
            <person name="Dougan G."/>
            <person name="James K.D."/>
            <person name="Thomson N.R."/>
            <person name="Pickard D."/>
            <person name="Wain J."/>
            <person name="Churcher C.M."/>
            <person name="Mungall K.L."/>
            <person name="Bentley S.D."/>
            <person name="Holden M.T.G."/>
            <person name="Sebaihia M."/>
            <person name="Baker S."/>
            <person name="Basham D."/>
            <person name="Brooks K."/>
            <person name="Chillingworth T."/>
            <person name="Connerton P."/>
            <person name="Cronin A."/>
            <person name="Davis P."/>
            <person name="Davies R.M."/>
            <person name="Dowd L."/>
            <person name="White N."/>
            <person name="Farrar J."/>
            <person name="Feltwell T."/>
            <person name="Hamlin N."/>
            <person name="Haque A."/>
            <person name="Hien T.T."/>
            <person name="Holroyd S."/>
            <person name="Jagels K."/>
            <person name="Krogh A."/>
            <person name="Larsen T.S."/>
            <person name="Leather S."/>
            <person name="Moule S."/>
            <person name="O'Gaora P."/>
            <person name="Parry C."/>
            <person name="Quail M.A."/>
            <person name="Rutherford K.M."/>
            <person name="Simmonds M."/>
            <person name="Skelton J."/>
            <person name="Stevens K."/>
            <person name="Whitehead S."/>
            <person name="Barrell B.G."/>
        </authorList>
    </citation>
    <scope>NUCLEOTIDE SEQUENCE [LARGE SCALE GENOMIC DNA]</scope>
    <source>
        <strain>CT18</strain>
    </source>
</reference>
<reference key="2">
    <citation type="journal article" date="2003" name="J. Bacteriol.">
        <title>Comparative genomics of Salmonella enterica serovar Typhi strains Ty2 and CT18.</title>
        <authorList>
            <person name="Deng W."/>
            <person name="Liou S.-R."/>
            <person name="Plunkett G. III"/>
            <person name="Mayhew G.F."/>
            <person name="Rose D.J."/>
            <person name="Burland V."/>
            <person name="Kodoyianni V."/>
            <person name="Schwartz D.C."/>
            <person name="Blattner F.R."/>
        </authorList>
    </citation>
    <scope>NUCLEOTIDE SEQUENCE [LARGE SCALE GENOMIC DNA]</scope>
    <source>
        <strain>ATCC 700931 / Ty2</strain>
    </source>
</reference>
<sequence length="239" mass="27392">MIKVLIVDDEPLARENLRILLQGQDDIEIVGECANAVEAIGAVHKLRPDVLFLDIQMPRISGLEIVGMLDPEHRPYIVFLTAFDEYAIKAFEEHAFDYLLKPIEEKRLEKTLHRLRQERSKQDVSLLPENQQALKFIPCTGHSRIYLLQMDDVAFVSSRMSGVYVTSSEGKEGFTELTLRTLESRTPLLRCHRQFLVNMAHLQEIRLEDNGQAELILRNGLTVPVSRRYLKSLKEAIGL</sequence>
<keyword id="KW-0238">DNA-binding</keyword>
<keyword id="KW-0597">Phosphoprotein</keyword>
<keyword id="KW-0804">Transcription</keyword>
<keyword id="KW-0805">Transcription regulation</keyword>
<keyword id="KW-0902">Two-component regulatory system</keyword>
<accession>Q8Z5C1</accession>
<dbReference type="EMBL" id="AL513382">
    <property type="protein sequence ID" value="CAD02538.1"/>
    <property type="molecule type" value="Genomic_DNA"/>
</dbReference>
<dbReference type="EMBL" id="AE014613">
    <property type="protein sequence ID" value="AAO68394.1"/>
    <property type="molecule type" value="Genomic_DNA"/>
</dbReference>
<dbReference type="RefSeq" id="NP_456718.1">
    <property type="nucleotide sequence ID" value="NC_003198.1"/>
</dbReference>
<dbReference type="RefSeq" id="WP_000598632.1">
    <property type="nucleotide sequence ID" value="NZ_WSUR01000002.1"/>
</dbReference>
<dbReference type="SMR" id="Q8Z5C1"/>
<dbReference type="STRING" id="220341.gene:17586293"/>
<dbReference type="KEGG" id="stt:t0697"/>
<dbReference type="KEGG" id="sty:STY2388"/>
<dbReference type="PATRIC" id="fig|220341.7.peg.2412"/>
<dbReference type="eggNOG" id="COG3279">
    <property type="taxonomic scope" value="Bacteria"/>
</dbReference>
<dbReference type="HOGENOM" id="CLU_000445_14_1_6"/>
<dbReference type="OMA" id="PLIRCHR"/>
<dbReference type="OrthoDB" id="236568at2"/>
<dbReference type="Proteomes" id="UP000000541">
    <property type="component" value="Chromosome"/>
</dbReference>
<dbReference type="Proteomes" id="UP000002670">
    <property type="component" value="Chromosome"/>
</dbReference>
<dbReference type="GO" id="GO:0003677">
    <property type="term" value="F:DNA binding"/>
    <property type="evidence" value="ECO:0007669"/>
    <property type="project" value="UniProtKB-KW"/>
</dbReference>
<dbReference type="GO" id="GO:0000156">
    <property type="term" value="F:phosphorelay response regulator activity"/>
    <property type="evidence" value="ECO:0007669"/>
    <property type="project" value="InterPro"/>
</dbReference>
<dbReference type="CDD" id="cd17532">
    <property type="entry name" value="REC_LytTR_AlgR-like"/>
    <property type="match status" value="1"/>
</dbReference>
<dbReference type="FunFam" id="2.40.50.1020:FF:000001">
    <property type="entry name" value="Two-component response regulator yehT"/>
    <property type="match status" value="1"/>
</dbReference>
<dbReference type="FunFam" id="3.40.50.2300:FF:000051">
    <property type="entry name" value="Two-component response regulator yehT"/>
    <property type="match status" value="1"/>
</dbReference>
<dbReference type="Gene3D" id="3.40.50.2300">
    <property type="match status" value="1"/>
</dbReference>
<dbReference type="Gene3D" id="2.40.50.1020">
    <property type="entry name" value="LytTr DNA-binding domain"/>
    <property type="match status" value="1"/>
</dbReference>
<dbReference type="InterPro" id="IPR011006">
    <property type="entry name" value="CheY-like_superfamily"/>
</dbReference>
<dbReference type="InterPro" id="IPR046947">
    <property type="entry name" value="LytR-like"/>
</dbReference>
<dbReference type="InterPro" id="IPR007492">
    <property type="entry name" value="LytTR_DNA-bd_dom"/>
</dbReference>
<dbReference type="InterPro" id="IPR001789">
    <property type="entry name" value="Sig_transdc_resp-reg_receiver"/>
</dbReference>
<dbReference type="NCBIfam" id="NF008677">
    <property type="entry name" value="PRK11697.1"/>
    <property type="match status" value="1"/>
</dbReference>
<dbReference type="PANTHER" id="PTHR37299:SF1">
    <property type="entry name" value="STAGE 0 SPORULATION PROTEIN A HOMOLOG"/>
    <property type="match status" value="1"/>
</dbReference>
<dbReference type="PANTHER" id="PTHR37299">
    <property type="entry name" value="TRANSCRIPTIONAL REGULATOR-RELATED"/>
    <property type="match status" value="1"/>
</dbReference>
<dbReference type="Pfam" id="PF04397">
    <property type="entry name" value="LytTR"/>
    <property type="match status" value="1"/>
</dbReference>
<dbReference type="Pfam" id="PF00072">
    <property type="entry name" value="Response_reg"/>
    <property type="match status" value="1"/>
</dbReference>
<dbReference type="SMART" id="SM00850">
    <property type="entry name" value="LytTR"/>
    <property type="match status" value="1"/>
</dbReference>
<dbReference type="SMART" id="SM00448">
    <property type="entry name" value="REC"/>
    <property type="match status" value="1"/>
</dbReference>
<dbReference type="SUPFAM" id="SSF52172">
    <property type="entry name" value="CheY-like"/>
    <property type="match status" value="1"/>
</dbReference>
<dbReference type="PROSITE" id="PS50930">
    <property type="entry name" value="HTH_LYTTR"/>
    <property type="match status" value="1"/>
</dbReference>
<dbReference type="PROSITE" id="PS50110">
    <property type="entry name" value="RESPONSE_REGULATORY"/>
    <property type="match status" value="1"/>
</dbReference>
<feature type="chain" id="PRO_0000081364" description="Transcriptional regulatory protein BtsR">
    <location>
        <begin position="1"/>
        <end position="239"/>
    </location>
</feature>
<feature type="domain" description="Response regulatory" evidence="3">
    <location>
        <begin position="3"/>
        <end position="116"/>
    </location>
</feature>
<feature type="domain" description="HTH LytTR-type" evidence="2">
    <location>
        <begin position="137"/>
        <end position="239"/>
    </location>
</feature>
<feature type="modified residue" description="4-aspartylphosphate" evidence="3">
    <location>
        <position position="54"/>
    </location>
</feature>
<feature type="sequence conflict" description="In Ref. 2; AAO68394." evidence="4" ref="2">
    <original>Q</original>
    <variation>S</variation>
    <location>
        <position position="131"/>
    </location>
</feature>
<evidence type="ECO:0000250" key="1">
    <source>
        <dbReference type="UniProtKB" id="P0AFT5"/>
    </source>
</evidence>
<evidence type="ECO:0000255" key="2">
    <source>
        <dbReference type="PROSITE-ProRule" id="PRU00112"/>
    </source>
</evidence>
<evidence type="ECO:0000255" key="3">
    <source>
        <dbReference type="PROSITE-ProRule" id="PRU00169"/>
    </source>
</evidence>
<evidence type="ECO:0000305" key="4"/>
<proteinExistence type="inferred from homology"/>